<gene>
    <name evidence="1" type="primary">alaS</name>
    <name type="ordered locus">LBL_0716</name>
</gene>
<organism>
    <name type="scientific">Leptospira borgpetersenii serovar Hardjo-bovis (strain L550)</name>
    <dbReference type="NCBI Taxonomy" id="355276"/>
    <lineage>
        <taxon>Bacteria</taxon>
        <taxon>Pseudomonadati</taxon>
        <taxon>Spirochaetota</taxon>
        <taxon>Spirochaetia</taxon>
        <taxon>Leptospirales</taxon>
        <taxon>Leptospiraceae</taxon>
        <taxon>Leptospira</taxon>
    </lineage>
</organism>
<keyword id="KW-0030">Aminoacyl-tRNA synthetase</keyword>
<keyword id="KW-0067">ATP-binding</keyword>
<keyword id="KW-0963">Cytoplasm</keyword>
<keyword id="KW-0436">Ligase</keyword>
<keyword id="KW-0479">Metal-binding</keyword>
<keyword id="KW-0547">Nucleotide-binding</keyword>
<keyword id="KW-0648">Protein biosynthesis</keyword>
<keyword id="KW-0694">RNA-binding</keyword>
<keyword id="KW-0820">tRNA-binding</keyword>
<keyword id="KW-0862">Zinc</keyword>
<comment type="function">
    <text evidence="1">Catalyzes the attachment of alanine to tRNA(Ala) in a two-step reaction: alanine is first activated by ATP to form Ala-AMP and then transferred to the acceptor end of tRNA(Ala). Also edits incorrectly charged Ser-tRNA(Ala) and Gly-tRNA(Ala) via its editing domain.</text>
</comment>
<comment type="catalytic activity">
    <reaction evidence="1">
        <text>tRNA(Ala) + L-alanine + ATP = L-alanyl-tRNA(Ala) + AMP + diphosphate</text>
        <dbReference type="Rhea" id="RHEA:12540"/>
        <dbReference type="Rhea" id="RHEA-COMP:9657"/>
        <dbReference type="Rhea" id="RHEA-COMP:9923"/>
        <dbReference type="ChEBI" id="CHEBI:30616"/>
        <dbReference type="ChEBI" id="CHEBI:33019"/>
        <dbReference type="ChEBI" id="CHEBI:57972"/>
        <dbReference type="ChEBI" id="CHEBI:78442"/>
        <dbReference type="ChEBI" id="CHEBI:78497"/>
        <dbReference type="ChEBI" id="CHEBI:456215"/>
        <dbReference type="EC" id="6.1.1.7"/>
    </reaction>
</comment>
<comment type="cofactor">
    <cofactor evidence="1">
        <name>Zn(2+)</name>
        <dbReference type="ChEBI" id="CHEBI:29105"/>
    </cofactor>
    <text evidence="1">Binds 1 zinc ion per subunit.</text>
</comment>
<comment type="subcellular location">
    <subcellularLocation>
        <location evidence="1">Cytoplasm</location>
    </subcellularLocation>
</comment>
<comment type="domain">
    <text evidence="1">Consists of three domains; the N-terminal catalytic domain, the editing domain and the C-terminal C-Ala domain. The editing domain removes incorrectly charged amino acids, while the C-Ala domain, along with tRNA(Ala), serves as a bridge to cooperatively bring together the editing and aminoacylation centers thus stimulating deacylation of misacylated tRNAs.</text>
</comment>
<comment type="similarity">
    <text evidence="1">Belongs to the class-II aminoacyl-tRNA synthetase family.</text>
</comment>
<accession>Q054G6</accession>
<dbReference type="EC" id="6.1.1.7" evidence="1"/>
<dbReference type="EMBL" id="CP000348">
    <property type="protein sequence ID" value="ABJ78279.1"/>
    <property type="molecule type" value="Genomic_DNA"/>
</dbReference>
<dbReference type="RefSeq" id="WP_011669606.1">
    <property type="nucleotide sequence ID" value="NC_008508.1"/>
</dbReference>
<dbReference type="SMR" id="Q054G6"/>
<dbReference type="KEGG" id="lbl:LBL_0716"/>
<dbReference type="HOGENOM" id="CLU_004485_1_1_12"/>
<dbReference type="GO" id="GO:0005829">
    <property type="term" value="C:cytosol"/>
    <property type="evidence" value="ECO:0007669"/>
    <property type="project" value="TreeGrafter"/>
</dbReference>
<dbReference type="GO" id="GO:0004813">
    <property type="term" value="F:alanine-tRNA ligase activity"/>
    <property type="evidence" value="ECO:0007669"/>
    <property type="project" value="UniProtKB-UniRule"/>
</dbReference>
<dbReference type="GO" id="GO:0002161">
    <property type="term" value="F:aminoacyl-tRNA deacylase activity"/>
    <property type="evidence" value="ECO:0007669"/>
    <property type="project" value="TreeGrafter"/>
</dbReference>
<dbReference type="GO" id="GO:0005524">
    <property type="term" value="F:ATP binding"/>
    <property type="evidence" value="ECO:0007669"/>
    <property type="project" value="UniProtKB-UniRule"/>
</dbReference>
<dbReference type="GO" id="GO:0000049">
    <property type="term" value="F:tRNA binding"/>
    <property type="evidence" value="ECO:0007669"/>
    <property type="project" value="UniProtKB-KW"/>
</dbReference>
<dbReference type="GO" id="GO:0008270">
    <property type="term" value="F:zinc ion binding"/>
    <property type="evidence" value="ECO:0007669"/>
    <property type="project" value="UniProtKB-UniRule"/>
</dbReference>
<dbReference type="GO" id="GO:0006419">
    <property type="term" value="P:alanyl-tRNA aminoacylation"/>
    <property type="evidence" value="ECO:0007669"/>
    <property type="project" value="UniProtKB-UniRule"/>
</dbReference>
<dbReference type="CDD" id="cd00673">
    <property type="entry name" value="AlaRS_core"/>
    <property type="match status" value="1"/>
</dbReference>
<dbReference type="FunFam" id="2.40.30.130:FF:000001">
    <property type="entry name" value="Alanine--tRNA ligase"/>
    <property type="match status" value="1"/>
</dbReference>
<dbReference type="FunFam" id="3.10.310.40:FF:000001">
    <property type="entry name" value="Alanine--tRNA ligase"/>
    <property type="match status" value="1"/>
</dbReference>
<dbReference type="FunFam" id="3.30.54.20:FF:000001">
    <property type="entry name" value="Alanine--tRNA ligase"/>
    <property type="match status" value="1"/>
</dbReference>
<dbReference type="FunFam" id="3.30.930.10:FF:000004">
    <property type="entry name" value="Alanine--tRNA ligase"/>
    <property type="match status" value="1"/>
</dbReference>
<dbReference type="FunFam" id="3.30.980.10:FF:000004">
    <property type="entry name" value="Alanine--tRNA ligase, cytoplasmic"/>
    <property type="match status" value="1"/>
</dbReference>
<dbReference type="Gene3D" id="2.40.30.130">
    <property type="match status" value="1"/>
</dbReference>
<dbReference type="Gene3D" id="3.10.310.40">
    <property type="match status" value="1"/>
</dbReference>
<dbReference type="Gene3D" id="3.30.54.20">
    <property type="match status" value="1"/>
</dbReference>
<dbReference type="Gene3D" id="3.30.930.10">
    <property type="entry name" value="Bira Bifunctional Protein, Domain 2"/>
    <property type="match status" value="1"/>
</dbReference>
<dbReference type="Gene3D" id="3.30.980.10">
    <property type="entry name" value="Threonyl-trna Synthetase, Chain A, domain 2"/>
    <property type="match status" value="1"/>
</dbReference>
<dbReference type="HAMAP" id="MF_00036_B">
    <property type="entry name" value="Ala_tRNA_synth_B"/>
    <property type="match status" value="1"/>
</dbReference>
<dbReference type="InterPro" id="IPR045864">
    <property type="entry name" value="aa-tRNA-synth_II/BPL/LPL"/>
</dbReference>
<dbReference type="InterPro" id="IPR002318">
    <property type="entry name" value="Ala-tRNA-lgiase_IIc"/>
</dbReference>
<dbReference type="InterPro" id="IPR018162">
    <property type="entry name" value="Ala-tRNA-ligase_IIc_anticod-bd"/>
</dbReference>
<dbReference type="InterPro" id="IPR018165">
    <property type="entry name" value="Ala-tRNA-synth_IIc_core"/>
</dbReference>
<dbReference type="InterPro" id="IPR018164">
    <property type="entry name" value="Ala-tRNA-synth_IIc_N"/>
</dbReference>
<dbReference type="InterPro" id="IPR050058">
    <property type="entry name" value="Ala-tRNA_ligase"/>
</dbReference>
<dbReference type="InterPro" id="IPR023033">
    <property type="entry name" value="Ala_tRNA_ligase_euk/bac"/>
</dbReference>
<dbReference type="InterPro" id="IPR003156">
    <property type="entry name" value="DHHA1_dom"/>
</dbReference>
<dbReference type="InterPro" id="IPR018163">
    <property type="entry name" value="Thr/Ala-tRNA-synth_IIc_edit"/>
</dbReference>
<dbReference type="InterPro" id="IPR009000">
    <property type="entry name" value="Transl_B-barrel_sf"/>
</dbReference>
<dbReference type="InterPro" id="IPR012947">
    <property type="entry name" value="tRNA_SAD"/>
</dbReference>
<dbReference type="NCBIfam" id="TIGR00344">
    <property type="entry name" value="alaS"/>
    <property type="match status" value="1"/>
</dbReference>
<dbReference type="PANTHER" id="PTHR11777:SF9">
    <property type="entry name" value="ALANINE--TRNA LIGASE, CYTOPLASMIC"/>
    <property type="match status" value="1"/>
</dbReference>
<dbReference type="PANTHER" id="PTHR11777">
    <property type="entry name" value="ALANYL-TRNA SYNTHETASE"/>
    <property type="match status" value="1"/>
</dbReference>
<dbReference type="Pfam" id="PF02272">
    <property type="entry name" value="DHHA1"/>
    <property type="match status" value="1"/>
</dbReference>
<dbReference type="Pfam" id="PF01411">
    <property type="entry name" value="tRNA-synt_2c"/>
    <property type="match status" value="1"/>
</dbReference>
<dbReference type="Pfam" id="PF07973">
    <property type="entry name" value="tRNA_SAD"/>
    <property type="match status" value="1"/>
</dbReference>
<dbReference type="PRINTS" id="PR00980">
    <property type="entry name" value="TRNASYNTHALA"/>
</dbReference>
<dbReference type="SMART" id="SM00863">
    <property type="entry name" value="tRNA_SAD"/>
    <property type="match status" value="1"/>
</dbReference>
<dbReference type="SUPFAM" id="SSF55681">
    <property type="entry name" value="Class II aaRS and biotin synthetases"/>
    <property type="match status" value="1"/>
</dbReference>
<dbReference type="SUPFAM" id="SSF101353">
    <property type="entry name" value="Putative anticodon-binding domain of alanyl-tRNA synthetase (AlaRS)"/>
    <property type="match status" value="1"/>
</dbReference>
<dbReference type="SUPFAM" id="SSF55186">
    <property type="entry name" value="ThrRS/AlaRS common domain"/>
    <property type="match status" value="1"/>
</dbReference>
<dbReference type="SUPFAM" id="SSF50447">
    <property type="entry name" value="Translation proteins"/>
    <property type="match status" value="1"/>
</dbReference>
<dbReference type="PROSITE" id="PS50860">
    <property type="entry name" value="AA_TRNA_LIGASE_II_ALA"/>
    <property type="match status" value="1"/>
</dbReference>
<protein>
    <recommendedName>
        <fullName evidence="1">Alanine--tRNA ligase</fullName>
        <ecNumber evidence="1">6.1.1.7</ecNumber>
    </recommendedName>
    <alternativeName>
        <fullName evidence="1">Alanyl-tRNA synthetase</fullName>
        <shortName evidence="1">AlaRS</shortName>
    </alternativeName>
</protein>
<proteinExistence type="inferred from homology"/>
<evidence type="ECO:0000255" key="1">
    <source>
        <dbReference type="HAMAP-Rule" id="MF_00036"/>
    </source>
</evidence>
<feature type="chain" id="PRO_0000347658" description="Alanine--tRNA ligase">
    <location>
        <begin position="1"/>
        <end position="940"/>
    </location>
</feature>
<feature type="binding site" evidence="1">
    <location>
        <position position="581"/>
    </location>
    <ligand>
        <name>Zn(2+)</name>
        <dbReference type="ChEBI" id="CHEBI:29105"/>
    </ligand>
</feature>
<feature type="binding site" evidence="1">
    <location>
        <position position="585"/>
    </location>
    <ligand>
        <name>Zn(2+)</name>
        <dbReference type="ChEBI" id="CHEBI:29105"/>
    </ligand>
</feature>
<feature type="binding site" evidence="1">
    <location>
        <position position="683"/>
    </location>
    <ligand>
        <name>Zn(2+)</name>
        <dbReference type="ChEBI" id="CHEBI:29105"/>
    </ligand>
</feature>
<feature type="binding site" evidence="1">
    <location>
        <position position="687"/>
    </location>
    <ligand>
        <name>Zn(2+)</name>
        <dbReference type="ChEBI" id="CHEBI:29105"/>
    </ligand>
</feature>
<name>SYA_LEPBL</name>
<reference key="1">
    <citation type="journal article" date="2006" name="Proc. Natl. Acad. Sci. U.S.A.">
        <title>Genome reduction in Leptospira borgpetersenii reflects limited transmission potential.</title>
        <authorList>
            <person name="Bulach D.M."/>
            <person name="Zuerner R.L."/>
            <person name="Wilson P."/>
            <person name="Seemann T."/>
            <person name="McGrath A."/>
            <person name="Cullen P.A."/>
            <person name="Davis J."/>
            <person name="Johnson M."/>
            <person name="Kuczek E."/>
            <person name="Alt D.P."/>
            <person name="Peterson-Burch B."/>
            <person name="Coppel R.L."/>
            <person name="Rood J.I."/>
            <person name="Davies J.K."/>
            <person name="Adler B."/>
        </authorList>
    </citation>
    <scope>NUCLEOTIDE SEQUENCE [LARGE SCALE GENOMIC DNA]</scope>
    <source>
        <strain>L550</strain>
    </source>
</reference>
<sequence length="940" mass="104043">MKRQSVSEIREIFLNYFKDKAHAVVPSSSLLPAGDPTLLFTTAGMVQFKPLFTGAVELPYTRATSCQKCLRTTDLEVVGKTERHCTFFEMLGNFSFGDYFKEEAIDYALDCSVNHLGFDKEKIWVTVYTDDDEAEKIWITKGIPKERIMRLGKKDNFWGPAGDSGACGPCSELYLDRGVEKGGPDCATSGTCRPGCDCDRFLEFWNIVFNQFNQDTEGNLHPLKQTGIDTGSGLERVALLLQGADSVYDTNELRKIISFYEELSGIKYDDVITLSKMPTQKNNTARIAANQKAAFRVVTDHIRSVLFSIGDGIYPDRTGRGYVIRRLIRRATLFGRKLNFKEPFLYKLVDKVVEIYKPRYPELGKNSAAIQKTILAEEELFLKTLELGLEKIETLVAKTKTSGKTIFSGADAFLLYGTYGFPAEMTEEIVAEQGLDFDKKGFQEELEKDRQFSRESWKANKVSLMTGQSVEKTEFLGYSSLSGKGNIIHLFNENKPAGALKEGQAGAIVLNKTPFYPEGGGQVGDTGFLRQGKNVFKVLDTQKENDVILHFGEVLSGEFSIAQELEAEVEAARRERLRFHHSGTHLLNGALRNLLGDHVLQKGSVVSPEYLRFDFSHPSALTSKEIRKIESWVNESIRKNYPVVTKELPIEDAKKIGAVATFGEKYGDRVRVVQMGDASVEFCGGTHVSHTGEIGYFFIKKESSPGAGNRRIEGVCGPAVIETFQNRFAELTESVQNLNLKIKSELDNEGSKILVNSNVPGPDEIREKLEKEGATAVTFFRDLSEEIASQIEESTSAFLKMKKSLESRDFENNASVIEKVFASSMDTGVGKIVSAIFDDKDPNSLKGLSDNLKVREKNLLVILGSKNADNASVVITCSSQLVSKGIHCGDLVRTVCEMLGGKGGGKPDMAQGGGKEKQNLESAISFAIQLAKQTLTGEKV</sequence>